<sequence>MKSVITTVVAAADAAGRFPSTSDLESVQGSIQRAAARLEAAEKLAANLDAVAKEAYDAAIKKYSYLNNAGEANSTDTFKAKCLRDIKHYLRLINYSLVVGGTGPLDEWGIAGQREVYRTLGLPTAPYVEALSFARNRGCSPRDLSAQALTEYNSLLDYVINSLS</sequence>
<accession>P20778</accession>
<keyword id="KW-0042">Antenna complex</keyword>
<keyword id="KW-0089">Bile pigment</keyword>
<keyword id="KW-0157">Chromophore</keyword>
<keyword id="KW-0249">Electron transport</keyword>
<keyword id="KW-0472">Membrane</keyword>
<keyword id="KW-0602">Photosynthesis</keyword>
<keyword id="KW-0605">Phycobilisome</keyword>
<keyword id="KW-0793">Thylakoid</keyword>
<keyword id="KW-0813">Transport</keyword>
<organism>
    <name type="scientific">Synechocystis sp. (strain PCC 6701)</name>
    <dbReference type="NCBI Taxonomy" id="1144"/>
    <lineage>
        <taxon>Bacteria</taxon>
        <taxon>Bacillati</taxon>
        <taxon>Cyanobacteriota</taxon>
        <taxon>Cyanophyceae</taxon>
        <taxon>Oscillatoriophycideae</taxon>
        <taxon>Chroococcales</taxon>
        <taxon>Geminocystaceae</taxon>
        <taxon>Geminocystis</taxon>
    </lineage>
</organism>
<proteinExistence type="inferred from homology"/>
<gene>
    <name type="primary">cpeA</name>
    <name type="synonym">cpaA</name>
</gene>
<evidence type="ECO:0000250" key="1"/>
<evidence type="ECO:0000305" key="2"/>
<reference key="1">
    <citation type="journal article" date="1990" name="J. Bacteriol.">
        <title>Structure and light-regulated expression of phycoerythrin genes in wild-type and phycobilisome assembly mutants of Synechocystis sp. strain PCC 6701.</title>
        <authorList>
            <person name="Anderson L.K."/>
            <person name="Grossman A.R."/>
        </authorList>
    </citation>
    <scope>NUCLEOTIDE SEQUENCE [GENOMIC DNA]</scope>
</reference>
<dbReference type="EMBL" id="M33812">
    <property type="protein sequence ID" value="AAA27280.1"/>
    <property type="molecule type" value="Genomic_DNA"/>
</dbReference>
<dbReference type="PIR" id="B35127">
    <property type="entry name" value="B35127"/>
</dbReference>
<dbReference type="SMR" id="P20778"/>
<dbReference type="GO" id="GO:0030089">
    <property type="term" value="C:phycobilisome"/>
    <property type="evidence" value="ECO:0007669"/>
    <property type="project" value="UniProtKB-KW"/>
</dbReference>
<dbReference type="GO" id="GO:0031676">
    <property type="term" value="C:plasma membrane-derived thylakoid membrane"/>
    <property type="evidence" value="ECO:0007669"/>
    <property type="project" value="UniProtKB-SubCell"/>
</dbReference>
<dbReference type="GO" id="GO:0015979">
    <property type="term" value="P:photosynthesis"/>
    <property type="evidence" value="ECO:0007669"/>
    <property type="project" value="UniProtKB-KW"/>
</dbReference>
<dbReference type="Gene3D" id="1.10.490.20">
    <property type="entry name" value="Phycocyanins"/>
    <property type="match status" value="1"/>
</dbReference>
<dbReference type="InterPro" id="IPR009050">
    <property type="entry name" value="Globin-like_sf"/>
</dbReference>
<dbReference type="InterPro" id="IPR012128">
    <property type="entry name" value="Phycobilisome_asu/bsu"/>
</dbReference>
<dbReference type="InterPro" id="IPR038719">
    <property type="entry name" value="Phycobilisome_asu/bsu_sf"/>
</dbReference>
<dbReference type="PANTHER" id="PTHR34011:SF4">
    <property type="entry name" value="C-PHYCOCYANIN ALPHA SUBUNIT"/>
    <property type="match status" value="1"/>
</dbReference>
<dbReference type="PANTHER" id="PTHR34011">
    <property type="entry name" value="PHYCOBILISOME 32.1 KDA LINKER POLYPEPTIDE, PHYCOCYANIN-ASSOCIATED, ROD 2-RELATED"/>
    <property type="match status" value="1"/>
</dbReference>
<dbReference type="Pfam" id="PF00502">
    <property type="entry name" value="Phycobilisome"/>
    <property type="match status" value="1"/>
</dbReference>
<dbReference type="PIRSF" id="PIRSF000081">
    <property type="entry name" value="Phycocyanin"/>
    <property type="match status" value="1"/>
</dbReference>
<dbReference type="SUPFAM" id="SSF46458">
    <property type="entry name" value="Globin-like"/>
    <property type="match status" value="1"/>
</dbReference>
<comment type="function">
    <text>Light-harvesting photosynthetic bile pigment-protein from the phycobiliprotein complex.</text>
</comment>
<comment type="subunit">
    <text>Heterodimer of an alpha and a beta chain.</text>
</comment>
<comment type="subcellular location">
    <subcellularLocation>
        <location evidence="1">Cellular thylakoid membrane</location>
        <topology evidence="1">Peripheral membrane protein</topology>
        <orientation evidence="1">Cytoplasmic side</orientation>
    </subcellularLocation>
    <text evidence="1">Forms the periphery of the phycobilisome rod.</text>
</comment>
<comment type="PTM">
    <text evidence="1">Contains two covalently linked bilin chromophores.</text>
</comment>
<comment type="similarity">
    <text evidence="2">Belongs to the phycobiliprotein family.</text>
</comment>
<protein>
    <recommendedName>
        <fullName>C-phycoerythrin alpha chain</fullName>
    </recommendedName>
</protein>
<name>PHEA_SYNY1</name>
<feature type="chain" id="PRO_0000199188" description="C-phycoerythrin alpha chain">
    <location>
        <begin position="1"/>
        <end position="164"/>
    </location>
</feature>
<feature type="binding site" description="covalent" evidence="1">
    <location>
        <position position="82"/>
    </location>
    <ligand>
        <name>(2R,3E)-phycoerythrobilin</name>
        <dbReference type="ChEBI" id="CHEBI:85276"/>
        <label>1</label>
    </ligand>
</feature>
<feature type="binding site" description="covalent" evidence="1">
    <location>
        <position position="139"/>
    </location>
    <ligand>
        <name>(2R,3E)-phycoerythrobilin</name>
        <dbReference type="ChEBI" id="CHEBI:85276"/>
        <label>2</label>
    </ligand>
</feature>